<dbReference type="EC" id="2.7.4.9" evidence="1"/>
<dbReference type="EMBL" id="AE017321">
    <property type="protein sequence ID" value="AAW70739.1"/>
    <property type="molecule type" value="Genomic_DNA"/>
</dbReference>
<dbReference type="RefSeq" id="WP_011256349.1">
    <property type="nucleotide sequence ID" value="NC_006833.1"/>
</dbReference>
<dbReference type="SMR" id="Q5GTD5"/>
<dbReference type="STRING" id="292805.Wbm0148"/>
<dbReference type="KEGG" id="wbm:Wbm0148"/>
<dbReference type="eggNOG" id="COG0125">
    <property type="taxonomic scope" value="Bacteria"/>
</dbReference>
<dbReference type="HOGENOM" id="CLU_049131_0_0_5"/>
<dbReference type="BRENDA" id="2.7.4.9">
    <property type="organism ID" value="13764"/>
</dbReference>
<dbReference type="Proteomes" id="UP000000534">
    <property type="component" value="Chromosome"/>
</dbReference>
<dbReference type="GO" id="GO:0005829">
    <property type="term" value="C:cytosol"/>
    <property type="evidence" value="ECO:0007669"/>
    <property type="project" value="TreeGrafter"/>
</dbReference>
<dbReference type="GO" id="GO:0005524">
    <property type="term" value="F:ATP binding"/>
    <property type="evidence" value="ECO:0007669"/>
    <property type="project" value="UniProtKB-UniRule"/>
</dbReference>
<dbReference type="GO" id="GO:0004798">
    <property type="term" value="F:dTMP kinase activity"/>
    <property type="evidence" value="ECO:0007669"/>
    <property type="project" value="UniProtKB-UniRule"/>
</dbReference>
<dbReference type="GO" id="GO:0006233">
    <property type="term" value="P:dTDP biosynthetic process"/>
    <property type="evidence" value="ECO:0007669"/>
    <property type="project" value="InterPro"/>
</dbReference>
<dbReference type="GO" id="GO:0006235">
    <property type="term" value="P:dTTP biosynthetic process"/>
    <property type="evidence" value="ECO:0007669"/>
    <property type="project" value="UniProtKB-UniRule"/>
</dbReference>
<dbReference type="GO" id="GO:0006227">
    <property type="term" value="P:dUDP biosynthetic process"/>
    <property type="evidence" value="ECO:0007669"/>
    <property type="project" value="TreeGrafter"/>
</dbReference>
<dbReference type="CDD" id="cd01672">
    <property type="entry name" value="TMPK"/>
    <property type="match status" value="1"/>
</dbReference>
<dbReference type="FunFam" id="3.40.50.300:FF:000225">
    <property type="entry name" value="Thymidylate kinase"/>
    <property type="match status" value="1"/>
</dbReference>
<dbReference type="Gene3D" id="3.40.50.300">
    <property type="entry name" value="P-loop containing nucleotide triphosphate hydrolases"/>
    <property type="match status" value="1"/>
</dbReference>
<dbReference type="HAMAP" id="MF_00165">
    <property type="entry name" value="Thymidylate_kinase"/>
    <property type="match status" value="1"/>
</dbReference>
<dbReference type="InterPro" id="IPR027417">
    <property type="entry name" value="P-loop_NTPase"/>
</dbReference>
<dbReference type="InterPro" id="IPR039430">
    <property type="entry name" value="Thymidylate_kin-like_dom"/>
</dbReference>
<dbReference type="InterPro" id="IPR018095">
    <property type="entry name" value="Thymidylate_kin_CS"/>
</dbReference>
<dbReference type="InterPro" id="IPR018094">
    <property type="entry name" value="Thymidylate_kinase"/>
</dbReference>
<dbReference type="NCBIfam" id="TIGR00041">
    <property type="entry name" value="DTMP_kinase"/>
    <property type="match status" value="1"/>
</dbReference>
<dbReference type="PANTHER" id="PTHR10344">
    <property type="entry name" value="THYMIDYLATE KINASE"/>
    <property type="match status" value="1"/>
</dbReference>
<dbReference type="PANTHER" id="PTHR10344:SF4">
    <property type="entry name" value="UMP-CMP KINASE 2, MITOCHONDRIAL"/>
    <property type="match status" value="1"/>
</dbReference>
<dbReference type="Pfam" id="PF02223">
    <property type="entry name" value="Thymidylate_kin"/>
    <property type="match status" value="1"/>
</dbReference>
<dbReference type="SUPFAM" id="SSF52540">
    <property type="entry name" value="P-loop containing nucleoside triphosphate hydrolases"/>
    <property type="match status" value="1"/>
</dbReference>
<dbReference type="PROSITE" id="PS01331">
    <property type="entry name" value="THYMIDYLATE_KINASE"/>
    <property type="match status" value="1"/>
</dbReference>
<gene>
    <name evidence="1" type="primary">tmk</name>
    <name type="ordered locus">Wbm0148</name>
</gene>
<keyword id="KW-0067">ATP-binding</keyword>
<keyword id="KW-0418">Kinase</keyword>
<keyword id="KW-0545">Nucleotide biosynthesis</keyword>
<keyword id="KW-0547">Nucleotide-binding</keyword>
<keyword id="KW-1185">Reference proteome</keyword>
<keyword id="KW-0808">Transferase</keyword>
<feature type="chain" id="PRO_1000023312" description="Thymidylate kinase">
    <location>
        <begin position="1"/>
        <end position="205"/>
    </location>
</feature>
<feature type="binding site" evidence="1">
    <location>
        <begin position="7"/>
        <end position="14"/>
    </location>
    <ligand>
        <name>ATP</name>
        <dbReference type="ChEBI" id="CHEBI:30616"/>
    </ligand>
</feature>
<sequence>MFITFEGIDGSGKTIQSELLANYFKQIHGENNMVLTREPGGTDFAEKVRGILLKDSIDPVSELLLLISMRYEHVKKVILPALKKGKIVICDRFIDSTIAYQGYGLGVDLELIRDLHKLVKIKYPDTTFILDIDVQIGLSRAMDKNKYEEMNISFYNKVRKGFQEIAINEPDRCSIITEIEAKDNNQVHVEIVNKVTATKPVLLRK</sequence>
<evidence type="ECO:0000255" key="1">
    <source>
        <dbReference type="HAMAP-Rule" id="MF_00165"/>
    </source>
</evidence>
<name>KTHY_WOLTR</name>
<organism>
    <name type="scientific">Wolbachia sp. subsp. Brugia malayi (strain TRS)</name>
    <dbReference type="NCBI Taxonomy" id="292805"/>
    <lineage>
        <taxon>Bacteria</taxon>
        <taxon>Pseudomonadati</taxon>
        <taxon>Pseudomonadota</taxon>
        <taxon>Alphaproteobacteria</taxon>
        <taxon>Rickettsiales</taxon>
        <taxon>Anaplasmataceae</taxon>
        <taxon>Wolbachieae</taxon>
        <taxon>Wolbachia</taxon>
    </lineage>
</organism>
<comment type="function">
    <text evidence="1">Phosphorylation of dTMP to form dTDP in both de novo and salvage pathways of dTTP synthesis.</text>
</comment>
<comment type="catalytic activity">
    <reaction evidence="1">
        <text>dTMP + ATP = dTDP + ADP</text>
        <dbReference type="Rhea" id="RHEA:13517"/>
        <dbReference type="ChEBI" id="CHEBI:30616"/>
        <dbReference type="ChEBI" id="CHEBI:58369"/>
        <dbReference type="ChEBI" id="CHEBI:63528"/>
        <dbReference type="ChEBI" id="CHEBI:456216"/>
        <dbReference type="EC" id="2.7.4.9"/>
    </reaction>
</comment>
<comment type="similarity">
    <text evidence="1">Belongs to the thymidylate kinase family.</text>
</comment>
<protein>
    <recommendedName>
        <fullName evidence="1">Thymidylate kinase</fullName>
        <ecNumber evidence="1">2.7.4.9</ecNumber>
    </recommendedName>
    <alternativeName>
        <fullName evidence="1">dTMP kinase</fullName>
    </alternativeName>
</protein>
<reference key="1">
    <citation type="journal article" date="2005" name="PLoS Biol.">
        <title>The Wolbachia genome of Brugia malayi: endosymbiont evolution within a human pathogenic nematode.</title>
        <authorList>
            <person name="Foster J."/>
            <person name="Ganatra M."/>
            <person name="Kamal I."/>
            <person name="Ware J."/>
            <person name="Makarova K."/>
            <person name="Ivanova N."/>
            <person name="Bhattacharyya A."/>
            <person name="Kapatral V."/>
            <person name="Kumar S."/>
            <person name="Posfai J."/>
            <person name="Vincze T."/>
            <person name="Ingram J."/>
            <person name="Moran L."/>
            <person name="Lapidus A."/>
            <person name="Omelchenko M."/>
            <person name="Kyrpides N."/>
            <person name="Ghedin E."/>
            <person name="Wang S."/>
            <person name="Goltsman E."/>
            <person name="Joukov V."/>
            <person name="Ostrovskaya O."/>
            <person name="Tsukerman K."/>
            <person name="Mazur M."/>
            <person name="Comb D."/>
            <person name="Koonin E."/>
            <person name="Slatko B."/>
        </authorList>
    </citation>
    <scope>NUCLEOTIDE SEQUENCE [LARGE SCALE GENOMIC DNA]</scope>
    <source>
        <strain>TRS</strain>
    </source>
</reference>
<accession>Q5GTD5</accession>
<proteinExistence type="inferred from homology"/>